<feature type="chain" id="PRO_1000081292" description="Small ribosomal subunit protein uS7">
    <location>
        <begin position="1"/>
        <end position="155"/>
    </location>
</feature>
<accession>A9BHA9</accession>
<comment type="function">
    <text evidence="1">One of the primary rRNA binding proteins, it binds directly to 16S rRNA where it nucleates assembly of the head domain of the 30S subunit. Is located at the subunit interface close to the decoding center, probably blocks exit of the E-site tRNA.</text>
</comment>
<comment type="subunit">
    <text evidence="1">Part of the 30S ribosomal subunit. Contacts proteins S9 and S11.</text>
</comment>
<comment type="similarity">
    <text evidence="1">Belongs to the universal ribosomal protein uS7 family.</text>
</comment>
<sequence>MRRRTAEKRNIVPDPIYGDILLSKFINRLMYDGKKSLAQQIVYSALERLAEATKENPIEAFHKAIDNVKPVVEVRSRRVGGSTYQVPFEVPENRATSLAIRWIVTSAQSKKGRDMVSKLSQELIDAYNNTGPSVKKKEDVHRMAEANRAFAHFRW</sequence>
<protein>
    <recommendedName>
        <fullName evidence="1">Small ribosomal subunit protein uS7</fullName>
    </recommendedName>
    <alternativeName>
        <fullName evidence="2">30S ribosomal protein S7</fullName>
    </alternativeName>
</protein>
<organism>
    <name type="scientific">Petrotoga mobilis (strain DSM 10674 / SJ95)</name>
    <dbReference type="NCBI Taxonomy" id="403833"/>
    <lineage>
        <taxon>Bacteria</taxon>
        <taxon>Thermotogati</taxon>
        <taxon>Thermotogota</taxon>
        <taxon>Thermotogae</taxon>
        <taxon>Petrotogales</taxon>
        <taxon>Petrotogaceae</taxon>
        <taxon>Petrotoga</taxon>
    </lineage>
</organism>
<gene>
    <name evidence="1" type="primary">rpsG</name>
    <name type="ordered locus">Pmob_0794</name>
</gene>
<reference key="1">
    <citation type="submission" date="2007-11" db="EMBL/GenBank/DDBJ databases">
        <title>Complete sequence of Petroga mobilis SJ95.</title>
        <authorList>
            <consortium name="US DOE Joint Genome Institute"/>
            <person name="Copeland A."/>
            <person name="Lucas S."/>
            <person name="Lapidus A."/>
            <person name="Barry K."/>
            <person name="Glavina del Rio T."/>
            <person name="Dalin E."/>
            <person name="Tice H."/>
            <person name="Pitluck S."/>
            <person name="Meincke L."/>
            <person name="Brettin T."/>
            <person name="Bruce D."/>
            <person name="Detter J.C."/>
            <person name="Han C."/>
            <person name="Kuske C.R."/>
            <person name="Schmutz J."/>
            <person name="Larimer F."/>
            <person name="Land M."/>
            <person name="Hauser L."/>
            <person name="Kyrpides N."/>
            <person name="Mikhailova N."/>
            <person name="Noll K."/>
            <person name="Richardson P."/>
        </authorList>
    </citation>
    <scope>NUCLEOTIDE SEQUENCE [LARGE SCALE GENOMIC DNA]</scope>
    <source>
        <strain>DSM 10674 / SJ95</strain>
    </source>
</reference>
<dbReference type="EMBL" id="CP000879">
    <property type="protein sequence ID" value="ABX31518.1"/>
    <property type="molecule type" value="Genomic_DNA"/>
</dbReference>
<dbReference type="RefSeq" id="WP_012208621.1">
    <property type="nucleotide sequence ID" value="NC_010003.1"/>
</dbReference>
<dbReference type="SMR" id="A9BHA9"/>
<dbReference type="STRING" id="403833.Pmob_0794"/>
<dbReference type="KEGG" id="pmo:Pmob_0794"/>
<dbReference type="eggNOG" id="COG0049">
    <property type="taxonomic scope" value="Bacteria"/>
</dbReference>
<dbReference type="HOGENOM" id="CLU_072226_1_1_0"/>
<dbReference type="OrthoDB" id="9807653at2"/>
<dbReference type="Proteomes" id="UP000000789">
    <property type="component" value="Chromosome"/>
</dbReference>
<dbReference type="GO" id="GO:0015935">
    <property type="term" value="C:small ribosomal subunit"/>
    <property type="evidence" value="ECO:0007669"/>
    <property type="project" value="InterPro"/>
</dbReference>
<dbReference type="GO" id="GO:0019843">
    <property type="term" value="F:rRNA binding"/>
    <property type="evidence" value="ECO:0007669"/>
    <property type="project" value="UniProtKB-UniRule"/>
</dbReference>
<dbReference type="GO" id="GO:0003735">
    <property type="term" value="F:structural constituent of ribosome"/>
    <property type="evidence" value="ECO:0007669"/>
    <property type="project" value="InterPro"/>
</dbReference>
<dbReference type="GO" id="GO:0000049">
    <property type="term" value="F:tRNA binding"/>
    <property type="evidence" value="ECO:0007669"/>
    <property type="project" value="UniProtKB-UniRule"/>
</dbReference>
<dbReference type="GO" id="GO:0006412">
    <property type="term" value="P:translation"/>
    <property type="evidence" value="ECO:0007669"/>
    <property type="project" value="UniProtKB-UniRule"/>
</dbReference>
<dbReference type="CDD" id="cd14869">
    <property type="entry name" value="uS7_Bacteria"/>
    <property type="match status" value="1"/>
</dbReference>
<dbReference type="FunFam" id="1.10.455.10:FF:000001">
    <property type="entry name" value="30S ribosomal protein S7"/>
    <property type="match status" value="1"/>
</dbReference>
<dbReference type="Gene3D" id="1.10.455.10">
    <property type="entry name" value="Ribosomal protein S7 domain"/>
    <property type="match status" value="1"/>
</dbReference>
<dbReference type="HAMAP" id="MF_00480_B">
    <property type="entry name" value="Ribosomal_uS7_B"/>
    <property type="match status" value="1"/>
</dbReference>
<dbReference type="InterPro" id="IPR000235">
    <property type="entry name" value="Ribosomal_uS7"/>
</dbReference>
<dbReference type="InterPro" id="IPR005717">
    <property type="entry name" value="Ribosomal_uS7_bac/org-type"/>
</dbReference>
<dbReference type="InterPro" id="IPR020606">
    <property type="entry name" value="Ribosomal_uS7_CS"/>
</dbReference>
<dbReference type="InterPro" id="IPR023798">
    <property type="entry name" value="Ribosomal_uS7_dom"/>
</dbReference>
<dbReference type="InterPro" id="IPR036823">
    <property type="entry name" value="Ribosomal_uS7_dom_sf"/>
</dbReference>
<dbReference type="NCBIfam" id="TIGR01029">
    <property type="entry name" value="rpsG_bact"/>
    <property type="match status" value="1"/>
</dbReference>
<dbReference type="PANTHER" id="PTHR11205">
    <property type="entry name" value="RIBOSOMAL PROTEIN S7"/>
    <property type="match status" value="1"/>
</dbReference>
<dbReference type="Pfam" id="PF00177">
    <property type="entry name" value="Ribosomal_S7"/>
    <property type="match status" value="1"/>
</dbReference>
<dbReference type="PIRSF" id="PIRSF002122">
    <property type="entry name" value="RPS7p_RPS7a_RPS5e_RPS7o"/>
    <property type="match status" value="1"/>
</dbReference>
<dbReference type="SUPFAM" id="SSF47973">
    <property type="entry name" value="Ribosomal protein S7"/>
    <property type="match status" value="1"/>
</dbReference>
<dbReference type="PROSITE" id="PS00052">
    <property type="entry name" value="RIBOSOMAL_S7"/>
    <property type="match status" value="1"/>
</dbReference>
<name>RS7_PETMO</name>
<keyword id="KW-0687">Ribonucleoprotein</keyword>
<keyword id="KW-0689">Ribosomal protein</keyword>
<keyword id="KW-0694">RNA-binding</keyword>
<keyword id="KW-0699">rRNA-binding</keyword>
<keyword id="KW-0820">tRNA-binding</keyword>
<proteinExistence type="inferred from homology"/>
<evidence type="ECO:0000255" key="1">
    <source>
        <dbReference type="HAMAP-Rule" id="MF_00480"/>
    </source>
</evidence>
<evidence type="ECO:0000305" key="2"/>